<gene>
    <name type="primary">fliO</name>
    <name type="synonym">flaP</name>
    <name type="synonym">flbD</name>
    <name type="ordered locus">STY2186</name>
    <name type="ordered locus">t0899</name>
</gene>
<proteinExistence type="inferred from homology"/>
<protein>
    <recommendedName>
        <fullName>Flagellar protein FliO</fullName>
    </recommendedName>
</protein>
<dbReference type="EMBL" id="AL513382">
    <property type="protein sequence ID" value="CAD05726.1"/>
    <property type="molecule type" value="Genomic_DNA"/>
</dbReference>
<dbReference type="EMBL" id="AE014613">
    <property type="protein sequence ID" value="AAO68577.1"/>
    <property type="molecule type" value="Genomic_DNA"/>
</dbReference>
<dbReference type="RefSeq" id="NP_456539.1">
    <property type="nucleotide sequence ID" value="NC_003198.1"/>
</dbReference>
<dbReference type="RefSeq" id="WP_000978276.1">
    <property type="nucleotide sequence ID" value="NZ_WSUR01000004.1"/>
</dbReference>
<dbReference type="SMR" id="P0A1L2"/>
<dbReference type="STRING" id="220341.gene:17586094"/>
<dbReference type="KEGG" id="stt:t0899"/>
<dbReference type="KEGG" id="sty:STY2186"/>
<dbReference type="PATRIC" id="fig|220341.7.peg.2201"/>
<dbReference type="eggNOG" id="COG3190">
    <property type="taxonomic scope" value="Bacteria"/>
</dbReference>
<dbReference type="HOGENOM" id="CLU_113213_1_0_6"/>
<dbReference type="OMA" id="QNLVKRP"/>
<dbReference type="OrthoDB" id="6897726at2"/>
<dbReference type="Proteomes" id="UP000000541">
    <property type="component" value="Chromosome"/>
</dbReference>
<dbReference type="Proteomes" id="UP000002670">
    <property type="component" value="Chromosome"/>
</dbReference>
<dbReference type="GO" id="GO:0009425">
    <property type="term" value="C:bacterial-type flagellum basal body"/>
    <property type="evidence" value="ECO:0007669"/>
    <property type="project" value="UniProtKB-SubCell"/>
</dbReference>
<dbReference type="GO" id="GO:0005886">
    <property type="term" value="C:plasma membrane"/>
    <property type="evidence" value="ECO:0007669"/>
    <property type="project" value="UniProtKB-SubCell"/>
</dbReference>
<dbReference type="GO" id="GO:0097588">
    <property type="term" value="P:archaeal or bacterial-type flagellum-dependent cell motility"/>
    <property type="evidence" value="ECO:0007669"/>
    <property type="project" value="UniProtKB-KW"/>
</dbReference>
<dbReference type="GO" id="GO:0044781">
    <property type="term" value="P:bacterial-type flagellum organization"/>
    <property type="evidence" value="ECO:0007669"/>
    <property type="project" value="InterPro"/>
</dbReference>
<dbReference type="GO" id="GO:0006935">
    <property type="term" value="P:chemotaxis"/>
    <property type="evidence" value="ECO:0007669"/>
    <property type="project" value="UniProtKB-KW"/>
</dbReference>
<dbReference type="InterPro" id="IPR022781">
    <property type="entry name" value="Flagellar_biosynth_FliO"/>
</dbReference>
<dbReference type="InterPro" id="IPR052205">
    <property type="entry name" value="FliO/MopB"/>
</dbReference>
<dbReference type="NCBIfam" id="TIGR03500">
    <property type="entry name" value="FliO_TIGR"/>
    <property type="match status" value="1"/>
</dbReference>
<dbReference type="PANTHER" id="PTHR38766">
    <property type="entry name" value="FLAGELLAR PROTEIN FLIO"/>
    <property type="match status" value="1"/>
</dbReference>
<dbReference type="PANTHER" id="PTHR38766:SF1">
    <property type="entry name" value="FLAGELLAR PROTEIN FLIO"/>
    <property type="match status" value="1"/>
</dbReference>
<dbReference type="Pfam" id="PF04347">
    <property type="entry name" value="FliO"/>
    <property type="match status" value="1"/>
</dbReference>
<keyword id="KW-0975">Bacterial flagellum</keyword>
<keyword id="KW-1003">Cell membrane</keyword>
<keyword id="KW-0145">Chemotaxis</keyword>
<keyword id="KW-0283">Flagellar rotation</keyword>
<keyword id="KW-0472">Membrane</keyword>
<keyword id="KW-0812">Transmembrane</keyword>
<keyword id="KW-1133">Transmembrane helix</keyword>
<sequence>MMKTEATVSQPTAPAGSPLMQVSGALIGIIALILAAAWVIKRMGFAPKGNSVRGLKVSASASLGPRERVVIVEVENARLVLGVTASQINLLHTLPPAENDTEAPVAPPADFQNMMKSLLKRSGRS</sequence>
<accession>P0A1L2</accession>
<accession>P54699</accession>
<name>FLIO_SALTI</name>
<reference key="1">
    <citation type="journal article" date="2001" name="Nature">
        <title>Complete genome sequence of a multiple drug resistant Salmonella enterica serovar Typhi CT18.</title>
        <authorList>
            <person name="Parkhill J."/>
            <person name="Dougan G."/>
            <person name="James K.D."/>
            <person name="Thomson N.R."/>
            <person name="Pickard D."/>
            <person name="Wain J."/>
            <person name="Churcher C.M."/>
            <person name="Mungall K.L."/>
            <person name="Bentley S.D."/>
            <person name="Holden M.T.G."/>
            <person name="Sebaihia M."/>
            <person name="Baker S."/>
            <person name="Basham D."/>
            <person name="Brooks K."/>
            <person name="Chillingworth T."/>
            <person name="Connerton P."/>
            <person name="Cronin A."/>
            <person name="Davis P."/>
            <person name="Davies R.M."/>
            <person name="Dowd L."/>
            <person name="White N."/>
            <person name="Farrar J."/>
            <person name="Feltwell T."/>
            <person name="Hamlin N."/>
            <person name="Haque A."/>
            <person name="Hien T.T."/>
            <person name="Holroyd S."/>
            <person name="Jagels K."/>
            <person name="Krogh A."/>
            <person name="Larsen T.S."/>
            <person name="Leather S."/>
            <person name="Moule S."/>
            <person name="O'Gaora P."/>
            <person name="Parry C."/>
            <person name="Quail M.A."/>
            <person name="Rutherford K.M."/>
            <person name="Simmonds M."/>
            <person name="Skelton J."/>
            <person name="Stevens K."/>
            <person name="Whitehead S."/>
            <person name="Barrell B.G."/>
        </authorList>
    </citation>
    <scope>NUCLEOTIDE SEQUENCE [LARGE SCALE GENOMIC DNA]</scope>
    <source>
        <strain>CT18</strain>
    </source>
</reference>
<reference key="2">
    <citation type="journal article" date="2003" name="J. Bacteriol.">
        <title>Comparative genomics of Salmonella enterica serovar Typhi strains Ty2 and CT18.</title>
        <authorList>
            <person name="Deng W."/>
            <person name="Liou S.-R."/>
            <person name="Plunkett G. III"/>
            <person name="Mayhew G.F."/>
            <person name="Rose D.J."/>
            <person name="Burland V."/>
            <person name="Kodoyianni V."/>
            <person name="Schwartz D.C."/>
            <person name="Blattner F.R."/>
        </authorList>
    </citation>
    <scope>NUCLEOTIDE SEQUENCE [LARGE SCALE GENOMIC DNA]</scope>
    <source>
        <strain>ATCC 700931 / Ty2</strain>
    </source>
</reference>
<comment type="subcellular location">
    <subcellularLocation>
        <location evidence="3">Cell membrane</location>
        <topology evidence="3">Single-pass membrane protein</topology>
    </subcellularLocation>
    <subcellularLocation>
        <location evidence="1">Bacterial flagellum basal body</location>
    </subcellularLocation>
</comment>
<comment type="similarity">
    <text evidence="3">Belongs to the FliO/MopB family.</text>
</comment>
<feature type="chain" id="PRO_0000206844" description="Flagellar protein FliO">
    <location>
        <begin position="1"/>
        <end position="125"/>
    </location>
</feature>
<feature type="transmembrane region" description="Helical" evidence="2">
    <location>
        <begin position="20"/>
        <end position="40"/>
    </location>
</feature>
<organism>
    <name type="scientific">Salmonella typhi</name>
    <dbReference type="NCBI Taxonomy" id="90370"/>
    <lineage>
        <taxon>Bacteria</taxon>
        <taxon>Pseudomonadati</taxon>
        <taxon>Pseudomonadota</taxon>
        <taxon>Gammaproteobacteria</taxon>
        <taxon>Enterobacterales</taxon>
        <taxon>Enterobacteriaceae</taxon>
        <taxon>Salmonella</taxon>
    </lineage>
</organism>
<evidence type="ECO:0000250" key="1"/>
<evidence type="ECO:0000255" key="2"/>
<evidence type="ECO:0000305" key="3"/>